<keyword id="KW-0002">3D-structure</keyword>
<keyword id="KW-0903">Direct protein sequencing</keyword>
<keyword id="KW-0496">Mitochondrion</keyword>
<keyword id="KW-0520">NAD</keyword>
<keyword id="KW-0560">Oxidoreductase</keyword>
<keyword id="KW-0597">Phosphoprotein</keyword>
<keyword id="KW-1185">Reference proteome</keyword>
<keyword id="KW-0809">Transit peptide</keyword>
<keyword id="KW-0816">Tricarboxylic acid cycle</keyword>
<protein>
    <recommendedName>
        <fullName>Malate dehydrogenase, mitochondrial</fullName>
        <ecNumber>1.1.1.37</ecNumber>
    </recommendedName>
</protein>
<comment type="catalytic activity">
    <reaction evidence="3">
        <text>(S)-malate + NAD(+) = oxaloacetate + NADH + H(+)</text>
        <dbReference type="Rhea" id="RHEA:21432"/>
        <dbReference type="ChEBI" id="CHEBI:15378"/>
        <dbReference type="ChEBI" id="CHEBI:15589"/>
        <dbReference type="ChEBI" id="CHEBI:16452"/>
        <dbReference type="ChEBI" id="CHEBI:57540"/>
        <dbReference type="ChEBI" id="CHEBI:57945"/>
        <dbReference type="EC" id="1.1.1.37"/>
    </reaction>
</comment>
<comment type="subunit">
    <text>Homodimer.</text>
</comment>
<comment type="interaction">
    <interactant intactId="EBI-10594">
        <id>P17505</id>
    </interactant>
    <interactant intactId="EBI-8603">
        <id>P10592</id>
        <label>SSA2</label>
    </interactant>
    <organismsDiffer>false</organismsDiffer>
    <experiments>2</experiments>
</comment>
<comment type="subcellular location">
    <subcellularLocation>
        <location evidence="4">Mitochondrion matrix</location>
    </subcellularLocation>
</comment>
<comment type="miscellaneous">
    <text>Yeast contains at least 3 malate dehydrogenase isoenzymes: a mitochondrial (MDH1), a cytoplasmic (MDH2) and a peroxisomal (MDH3).</text>
</comment>
<comment type="miscellaneous">
    <text evidence="5">Present with 28100 molecules/cell in log phase SD medium.</text>
</comment>
<comment type="similarity">
    <text evidence="8">Belongs to the LDH/MDH superfamily. MDH type 1 family.</text>
</comment>
<accession>P17505</accession>
<accession>D6VXK3</accession>
<accession>E9P8U0</accession>
<organism>
    <name type="scientific">Saccharomyces cerevisiae (strain ATCC 204508 / S288c)</name>
    <name type="common">Baker's yeast</name>
    <dbReference type="NCBI Taxonomy" id="559292"/>
    <lineage>
        <taxon>Eukaryota</taxon>
        <taxon>Fungi</taxon>
        <taxon>Dikarya</taxon>
        <taxon>Ascomycota</taxon>
        <taxon>Saccharomycotina</taxon>
        <taxon>Saccharomycetes</taxon>
        <taxon>Saccharomycetales</taxon>
        <taxon>Saccharomycetaceae</taxon>
        <taxon>Saccharomyces</taxon>
    </lineage>
</organism>
<sequence>MLSRVAKRAFSSTVANPYKVTVLGAGGGIGQPLSLLLKLNHKVTDLRLYDLKGAKGVATDLSHIPTNSVVKGFTPEEPDGLNNALKDTDMVLIPAGVPRKPGMTRDDLFAINASIVRDLAAATAESAPNAAILVISNPVNSTVPIVAQVLKNKGVYNPKKLFGVTTLDSIRAARFISEVENTDPTQERVNVIGGHSGITIIPLISQTNHKLMSDDKRHELIHRIQFGGDEVVKAKNGAGSATLSMAHAGAKFANAVLSGFKGERDVIEPSFVDSPLFKSEGIEFFASPVTLGPDGIEKIHPIGELSSEEEEMLQKCKETLKKNIEKGVNFVASK</sequence>
<reference key="1">
    <citation type="journal article" date="1988" name="Biochemistry">
        <title>Gene sequence and primary structure of mitochondrial malate dehydrogenase from Saccharomyces cerevisiae.</title>
        <authorList>
            <person name="Thompson L.M."/>
            <person name="Sutherland P."/>
            <person name="Steffan J.S."/>
            <person name="McAlister-Henn L."/>
        </authorList>
    </citation>
    <scope>NUCLEOTIDE SEQUENCE [GENOMIC DNA]</scope>
    <scope>PROTEIN SEQUENCE OF 18-33</scope>
    <source>
        <strain>S173-6B</strain>
    </source>
</reference>
<reference key="2">
    <citation type="journal article" date="1994" name="Nature">
        <title>Complete DNA sequence of yeast chromosome XI.</title>
        <authorList>
            <person name="Dujon B."/>
            <person name="Alexandraki D."/>
            <person name="Andre B."/>
            <person name="Ansorge W."/>
            <person name="Baladron V."/>
            <person name="Ballesta J.P.G."/>
            <person name="Banrevi A."/>
            <person name="Bolle P.-A."/>
            <person name="Bolotin-Fukuhara M."/>
            <person name="Bossier P."/>
            <person name="Bou G."/>
            <person name="Boyer J."/>
            <person name="Buitrago M.J."/>
            <person name="Cheret G."/>
            <person name="Colleaux L."/>
            <person name="Daignan-Fornier B."/>
            <person name="del Rey F."/>
            <person name="Dion C."/>
            <person name="Domdey H."/>
            <person name="Duesterhoeft A."/>
            <person name="Duesterhus S."/>
            <person name="Entian K.-D."/>
            <person name="Erfle H."/>
            <person name="Esteban P.F."/>
            <person name="Feldmann H."/>
            <person name="Fernandes L."/>
            <person name="Fobo G.M."/>
            <person name="Fritz C."/>
            <person name="Fukuhara H."/>
            <person name="Gabel C."/>
            <person name="Gaillon L."/>
            <person name="Garcia-Cantalejo J.M."/>
            <person name="Garcia-Ramirez J.J."/>
            <person name="Gent M.E."/>
            <person name="Ghazvini M."/>
            <person name="Goffeau A."/>
            <person name="Gonzalez A."/>
            <person name="Grothues D."/>
            <person name="Guerreiro P."/>
            <person name="Hegemann J.H."/>
            <person name="Hewitt N."/>
            <person name="Hilger F."/>
            <person name="Hollenberg C.P."/>
            <person name="Horaitis O."/>
            <person name="Indge K.J."/>
            <person name="Jacquier A."/>
            <person name="James C.M."/>
            <person name="Jauniaux J.-C."/>
            <person name="Jimenez A."/>
            <person name="Keuchel H."/>
            <person name="Kirchrath L."/>
            <person name="Kleine K."/>
            <person name="Koetter P."/>
            <person name="Legrain P."/>
            <person name="Liebl S."/>
            <person name="Louis E.J."/>
            <person name="Maia e Silva A."/>
            <person name="Marck C."/>
            <person name="Monnier A.-L."/>
            <person name="Moestl D."/>
            <person name="Mueller S."/>
            <person name="Obermaier B."/>
            <person name="Oliver S.G."/>
            <person name="Pallier C."/>
            <person name="Pascolo S."/>
            <person name="Pfeiffer F."/>
            <person name="Philippsen P."/>
            <person name="Planta R.J."/>
            <person name="Pohl F.M."/>
            <person name="Pohl T.M."/>
            <person name="Poehlmann R."/>
            <person name="Portetelle D."/>
            <person name="Purnelle B."/>
            <person name="Puzos V."/>
            <person name="Ramezani Rad M."/>
            <person name="Rasmussen S.W."/>
            <person name="Remacha M.A."/>
            <person name="Revuelta J.L."/>
            <person name="Richard G.-F."/>
            <person name="Rieger M."/>
            <person name="Rodrigues-Pousada C."/>
            <person name="Rose M."/>
            <person name="Rupp T."/>
            <person name="Santos M.A."/>
            <person name="Schwager C."/>
            <person name="Sensen C."/>
            <person name="Skala J."/>
            <person name="Soares H."/>
            <person name="Sor F."/>
            <person name="Stegemann J."/>
            <person name="Tettelin H."/>
            <person name="Thierry A."/>
            <person name="Tzermia M."/>
            <person name="Urrestarazu L.A."/>
            <person name="van Dyck L."/>
            <person name="van Vliet-Reedijk J.C."/>
            <person name="Valens M."/>
            <person name="Vandenbol M."/>
            <person name="Vilela C."/>
            <person name="Vissers S."/>
            <person name="von Wettstein D."/>
            <person name="Voss H."/>
            <person name="Wiemann S."/>
            <person name="Xu G."/>
            <person name="Zimmermann J."/>
            <person name="Haasemann M."/>
            <person name="Becker I."/>
            <person name="Mewes H.-W."/>
        </authorList>
    </citation>
    <scope>NUCLEOTIDE SEQUENCE [LARGE SCALE GENOMIC DNA]</scope>
    <source>
        <strain>ATCC 204508 / S288c</strain>
    </source>
</reference>
<reference key="3">
    <citation type="journal article" date="2014" name="G3 (Bethesda)">
        <title>The reference genome sequence of Saccharomyces cerevisiae: Then and now.</title>
        <authorList>
            <person name="Engel S.R."/>
            <person name="Dietrich F.S."/>
            <person name="Fisk D.G."/>
            <person name="Binkley G."/>
            <person name="Balakrishnan R."/>
            <person name="Costanzo M.C."/>
            <person name="Dwight S.S."/>
            <person name="Hitz B.C."/>
            <person name="Karra K."/>
            <person name="Nash R.S."/>
            <person name="Weng S."/>
            <person name="Wong E.D."/>
            <person name="Lloyd P."/>
            <person name="Skrzypek M.S."/>
            <person name="Miyasato S.R."/>
            <person name="Simison M."/>
            <person name="Cherry J.M."/>
        </authorList>
    </citation>
    <scope>GENOME REANNOTATION</scope>
    <source>
        <strain>ATCC 204508 / S288c</strain>
    </source>
</reference>
<reference key="4">
    <citation type="journal article" date="2007" name="Genome Res.">
        <title>Approaching a complete repository of sequence-verified protein-encoding clones for Saccharomyces cerevisiae.</title>
        <authorList>
            <person name="Hu Y."/>
            <person name="Rolfs A."/>
            <person name="Bhullar B."/>
            <person name="Murthy T.V.S."/>
            <person name="Zhu C."/>
            <person name="Berger M.F."/>
            <person name="Camargo A.A."/>
            <person name="Kelley F."/>
            <person name="McCarron S."/>
            <person name="Jepson D."/>
            <person name="Richardson A."/>
            <person name="Raphael J."/>
            <person name="Moreira D."/>
            <person name="Taycher E."/>
            <person name="Zuo D."/>
            <person name="Mohr S."/>
            <person name="Kane M.F."/>
            <person name="Williamson J."/>
            <person name="Simpson A.J.G."/>
            <person name="Bulyk M.L."/>
            <person name="Harlow E."/>
            <person name="Marsischky G."/>
            <person name="Kolodner R.D."/>
            <person name="LaBaer J."/>
        </authorList>
    </citation>
    <scope>NUCLEOTIDE SEQUENCE [GENOMIC DNA]</scope>
    <source>
        <strain>ATCC 204508 / S288c</strain>
    </source>
</reference>
<reference key="5">
    <citation type="journal article" date="1987" name="Biochim. Biophys. Acta">
        <title>Purification procedure and N-terminal amino acid sequence of yeast malate dehydrogenase isoenzymes.</title>
        <authorList>
            <person name="Kopetzki E."/>
            <person name="Entian K.-D."/>
            <person name="Lottspeich F."/>
            <person name="Mecke D."/>
        </authorList>
    </citation>
    <scope>PROTEIN SEQUENCE OF 18-73</scope>
</reference>
<reference key="6">
    <citation type="journal article" date="2001" name="Biochemistry">
        <title>Yeast mitochondrial dehydrogenases are associated in a supramolecular complex.</title>
        <authorList>
            <person name="Grandier-Vazeille X."/>
            <person name="Bathany K."/>
            <person name="Chaignepain S."/>
            <person name="Camougrand N."/>
            <person name="Manon S."/>
            <person name="Schmitter J.-M."/>
        </authorList>
    </citation>
    <scope>PROTEIN SEQUENCE OF 55-62</scope>
    <scope>SUBCELLULAR LOCATION</scope>
    <source>
        <strain>ATCC 201238 / W303-1B</strain>
    </source>
</reference>
<reference key="7">
    <citation type="journal article" date="2003" name="Nature">
        <title>Global analysis of protein expression in yeast.</title>
        <authorList>
            <person name="Ghaemmaghami S."/>
            <person name="Huh W.-K."/>
            <person name="Bower K."/>
            <person name="Howson R.W."/>
            <person name="Belle A."/>
            <person name="Dephoure N."/>
            <person name="O'Shea E.K."/>
            <person name="Weissman J.S."/>
        </authorList>
    </citation>
    <scope>LEVEL OF PROTEIN EXPRESSION [LARGE SCALE ANALYSIS]</scope>
</reference>
<reference key="8">
    <citation type="journal article" date="2007" name="Mol. Cell. Proteomics">
        <title>Profiling phosphoproteins of yeast mitochondria reveals a role of phosphorylation in assembly of the ATP synthase.</title>
        <authorList>
            <person name="Reinders J."/>
            <person name="Wagner K."/>
            <person name="Zahedi R.P."/>
            <person name="Stojanovski D."/>
            <person name="Eyrich B."/>
            <person name="van der Laan M."/>
            <person name="Rehling P."/>
            <person name="Sickmann A."/>
            <person name="Pfanner N."/>
            <person name="Meisinger C."/>
        </authorList>
    </citation>
    <scope>PHOSPHORYLATION [LARGE SCALE ANALYSIS] AT SER-177</scope>
    <scope>IDENTIFICATION BY MASS SPECTROMETRY [LARGE SCALE ANALYSIS]</scope>
    <source>
        <strain>ATCC 76625 / YPH499</strain>
    </source>
</reference>
<reference key="9">
    <citation type="journal article" date="2009" name="Science">
        <title>Global analysis of Cdk1 substrate phosphorylation sites provides insights into evolution.</title>
        <authorList>
            <person name="Holt L.J."/>
            <person name="Tuch B.B."/>
            <person name="Villen J."/>
            <person name="Johnson A.D."/>
            <person name="Gygi S.P."/>
            <person name="Morgan D.O."/>
        </authorList>
    </citation>
    <scope>PHOSPHORYLATION [LARGE SCALE ANALYSIS] AT THR-199</scope>
    <scope>IDENTIFICATION BY MASS SPECTROMETRY [LARGE SCALE ANALYSIS]</scope>
</reference>
<feature type="transit peptide" description="Mitochondrion" evidence="6 7">
    <location>
        <begin position="1"/>
        <end position="17"/>
    </location>
</feature>
<feature type="chain" id="PRO_0000018633" description="Malate dehydrogenase, mitochondrial">
    <location>
        <begin position="18"/>
        <end position="334"/>
    </location>
</feature>
<feature type="active site" description="Proton acceptor" evidence="1">
    <location>
        <position position="195"/>
    </location>
</feature>
<feature type="binding site" evidence="2">
    <location>
        <begin position="24"/>
        <end position="30"/>
    </location>
    <ligand>
        <name>NAD(+)</name>
        <dbReference type="ChEBI" id="CHEBI:57540"/>
    </ligand>
</feature>
<feature type="binding site" evidence="2">
    <location>
        <position position="50"/>
    </location>
    <ligand>
        <name>NAD(+)</name>
        <dbReference type="ChEBI" id="CHEBI:57540"/>
    </ligand>
</feature>
<feature type="binding site" evidence="3">
    <location>
        <position position="99"/>
    </location>
    <ligand>
        <name>substrate</name>
    </ligand>
</feature>
<feature type="binding site" evidence="3">
    <location>
        <position position="105"/>
    </location>
    <ligand>
        <name>substrate</name>
    </ligand>
</feature>
<feature type="binding site" evidence="2">
    <location>
        <position position="112"/>
    </location>
    <ligand>
        <name>NAD(+)</name>
        <dbReference type="ChEBI" id="CHEBI:57540"/>
    </ligand>
</feature>
<feature type="binding site" evidence="2">
    <location>
        <begin position="135"/>
        <end position="137"/>
    </location>
    <ligand>
        <name>NAD(+)</name>
        <dbReference type="ChEBI" id="CHEBI:57540"/>
    </ligand>
</feature>
<feature type="binding site" evidence="3">
    <location>
        <position position="137"/>
    </location>
    <ligand>
        <name>substrate</name>
    </ligand>
</feature>
<feature type="binding site" evidence="3">
    <location>
        <position position="171"/>
    </location>
    <ligand>
        <name>substrate</name>
    </ligand>
</feature>
<feature type="binding site" evidence="2">
    <location>
        <position position="245"/>
    </location>
    <ligand>
        <name>NAD(+)</name>
        <dbReference type="ChEBI" id="CHEBI:57540"/>
    </ligand>
</feature>
<feature type="modified residue" description="Phosphoserine" evidence="9">
    <location>
        <position position="177"/>
    </location>
</feature>
<feature type="modified residue" description="Phosphothreonine" evidence="10">
    <location>
        <position position="199"/>
    </location>
</feature>
<feature type="sequence conflict" description="In Ref. 5; AA sequence." evidence="8" ref="5">
    <original>S</original>
    <variation>G</variation>
    <location>
        <position position="68"/>
    </location>
</feature>
<feature type="sequence conflict" description="In Ref. 4; AAS56240." evidence="8" ref="4">
    <original>S</original>
    <variation>F</variation>
    <location>
        <position position="306"/>
    </location>
</feature>
<evidence type="ECO:0000250" key="1">
    <source>
        <dbReference type="UniProtKB" id="P00346"/>
    </source>
</evidence>
<evidence type="ECO:0000250" key="2">
    <source>
        <dbReference type="UniProtKB" id="P40926"/>
    </source>
</evidence>
<evidence type="ECO:0000255" key="3">
    <source>
        <dbReference type="PROSITE-ProRule" id="PRU10004"/>
    </source>
</evidence>
<evidence type="ECO:0000269" key="4">
    <source>
    </source>
</evidence>
<evidence type="ECO:0000269" key="5">
    <source>
    </source>
</evidence>
<evidence type="ECO:0000269" key="6">
    <source>
    </source>
</evidence>
<evidence type="ECO:0000269" key="7">
    <source>
    </source>
</evidence>
<evidence type="ECO:0000305" key="8"/>
<evidence type="ECO:0007744" key="9">
    <source>
    </source>
</evidence>
<evidence type="ECO:0007744" key="10">
    <source>
    </source>
</evidence>
<gene>
    <name type="primary">MDH1</name>
    <name type="ordered locus">YKL085W</name>
</gene>
<name>MDHM_YEAST</name>
<dbReference type="EC" id="1.1.1.37"/>
<dbReference type="EMBL" id="J02841">
    <property type="protein sequence ID" value="AAA34759.1"/>
    <property type="molecule type" value="Genomic_DNA"/>
</dbReference>
<dbReference type="EMBL" id="Z28085">
    <property type="protein sequence ID" value="CAA81923.1"/>
    <property type="molecule type" value="Genomic_DNA"/>
</dbReference>
<dbReference type="EMBL" id="AY557914">
    <property type="protein sequence ID" value="AAS56240.1"/>
    <property type="molecule type" value="Genomic_DNA"/>
</dbReference>
<dbReference type="EMBL" id="BK006944">
    <property type="protein sequence ID" value="DAA09073.1"/>
    <property type="molecule type" value="Genomic_DNA"/>
</dbReference>
<dbReference type="PIR" id="A31945">
    <property type="entry name" value="DEBYMM"/>
</dbReference>
<dbReference type="RefSeq" id="NP_012838.1">
    <property type="nucleotide sequence ID" value="NM_001179651.1"/>
</dbReference>
<dbReference type="PDB" id="1HR9">
    <property type="method" value="X-ray"/>
    <property type="resolution" value="3.01 A"/>
    <property type="chains" value="O/P/Q/R=2-9"/>
</dbReference>
<dbReference type="PDBsum" id="1HR9"/>
<dbReference type="SMR" id="P17505"/>
<dbReference type="BioGRID" id="34048">
    <property type="interactions" value="173"/>
</dbReference>
<dbReference type="DIP" id="DIP-5734N"/>
<dbReference type="FunCoup" id="P17505">
    <property type="interactions" value="1136"/>
</dbReference>
<dbReference type="IntAct" id="P17505">
    <property type="interactions" value="69"/>
</dbReference>
<dbReference type="STRING" id="4932.YKL085W"/>
<dbReference type="iPTMnet" id="P17505"/>
<dbReference type="PaxDb" id="4932-YKL085W"/>
<dbReference type="PeptideAtlas" id="P17505"/>
<dbReference type="TopDownProteomics" id="P17505"/>
<dbReference type="EnsemblFungi" id="YKL085W_mRNA">
    <property type="protein sequence ID" value="YKL085W"/>
    <property type="gene ID" value="YKL085W"/>
</dbReference>
<dbReference type="GeneID" id="853777"/>
<dbReference type="KEGG" id="sce:YKL085W"/>
<dbReference type="AGR" id="SGD:S000001568"/>
<dbReference type="SGD" id="S000001568">
    <property type="gene designation" value="MDH1"/>
</dbReference>
<dbReference type="VEuPathDB" id="FungiDB:YKL085W"/>
<dbReference type="eggNOG" id="KOG1494">
    <property type="taxonomic scope" value="Eukaryota"/>
</dbReference>
<dbReference type="GeneTree" id="ENSGT00940000176501"/>
<dbReference type="HOGENOM" id="CLU_047181_1_0_1"/>
<dbReference type="InParanoid" id="P17505"/>
<dbReference type="OMA" id="ASCAEYI"/>
<dbReference type="OrthoDB" id="4069699at2759"/>
<dbReference type="BioCyc" id="YEAST:YKL085W-MONOMER"/>
<dbReference type="BioGRID-ORCS" id="853777">
    <property type="hits" value="1 hit in 10 CRISPR screens"/>
</dbReference>
<dbReference type="EvolutionaryTrace" id="P17505"/>
<dbReference type="PRO" id="PR:P17505"/>
<dbReference type="Proteomes" id="UP000002311">
    <property type="component" value="Chromosome XI"/>
</dbReference>
<dbReference type="RNAct" id="P17505">
    <property type="molecule type" value="protein"/>
</dbReference>
<dbReference type="GO" id="GO:0005737">
    <property type="term" value="C:cytoplasm"/>
    <property type="evidence" value="ECO:0000318"/>
    <property type="project" value="GO_Central"/>
</dbReference>
<dbReference type="GO" id="GO:0005759">
    <property type="term" value="C:mitochondrial matrix"/>
    <property type="evidence" value="ECO:0000314"/>
    <property type="project" value="SGD"/>
</dbReference>
<dbReference type="GO" id="GO:0005739">
    <property type="term" value="C:mitochondrion"/>
    <property type="evidence" value="ECO:0000314"/>
    <property type="project" value="SGD"/>
</dbReference>
<dbReference type="GO" id="GO:0030060">
    <property type="term" value="F:L-malate dehydrogenase (NAD+) activity"/>
    <property type="evidence" value="ECO:0000314"/>
    <property type="project" value="SGD"/>
</dbReference>
<dbReference type="GO" id="GO:0003729">
    <property type="term" value="F:mRNA binding"/>
    <property type="evidence" value="ECO:0000314"/>
    <property type="project" value="SGD"/>
</dbReference>
<dbReference type="GO" id="GO:0009060">
    <property type="term" value="P:aerobic respiration"/>
    <property type="evidence" value="ECO:0000315"/>
    <property type="project" value="SGD"/>
</dbReference>
<dbReference type="GO" id="GO:0006108">
    <property type="term" value="P:malate metabolic process"/>
    <property type="evidence" value="ECO:0007669"/>
    <property type="project" value="InterPro"/>
</dbReference>
<dbReference type="GO" id="GO:0006099">
    <property type="term" value="P:tricarboxylic acid cycle"/>
    <property type="evidence" value="ECO:0000315"/>
    <property type="project" value="SGD"/>
</dbReference>
<dbReference type="CDD" id="cd01337">
    <property type="entry name" value="MDH_glyoxysomal_mitochondrial"/>
    <property type="match status" value="1"/>
</dbReference>
<dbReference type="FunFam" id="3.40.50.720:FF:000017">
    <property type="entry name" value="Malate dehydrogenase"/>
    <property type="match status" value="1"/>
</dbReference>
<dbReference type="FunFam" id="3.90.110.10:FF:000001">
    <property type="entry name" value="Malate dehydrogenase"/>
    <property type="match status" value="1"/>
</dbReference>
<dbReference type="Gene3D" id="3.90.110.10">
    <property type="entry name" value="Lactate dehydrogenase/glycoside hydrolase, family 4, C-terminal"/>
    <property type="match status" value="1"/>
</dbReference>
<dbReference type="Gene3D" id="3.40.50.720">
    <property type="entry name" value="NAD(P)-binding Rossmann-like Domain"/>
    <property type="match status" value="1"/>
</dbReference>
<dbReference type="InterPro" id="IPR001557">
    <property type="entry name" value="L-lactate/malate_DH"/>
</dbReference>
<dbReference type="InterPro" id="IPR022383">
    <property type="entry name" value="Lactate/malate_DH_C"/>
</dbReference>
<dbReference type="InterPro" id="IPR001236">
    <property type="entry name" value="Lactate/malate_DH_N"/>
</dbReference>
<dbReference type="InterPro" id="IPR015955">
    <property type="entry name" value="Lactate_DH/Glyco_Ohase_4_C"/>
</dbReference>
<dbReference type="InterPro" id="IPR001252">
    <property type="entry name" value="Malate_DH_AS"/>
</dbReference>
<dbReference type="InterPro" id="IPR010097">
    <property type="entry name" value="Malate_DH_type1"/>
</dbReference>
<dbReference type="InterPro" id="IPR036291">
    <property type="entry name" value="NAD(P)-bd_dom_sf"/>
</dbReference>
<dbReference type="NCBIfam" id="TIGR01772">
    <property type="entry name" value="MDH_euk_gproteo"/>
    <property type="match status" value="1"/>
</dbReference>
<dbReference type="PANTHER" id="PTHR11540">
    <property type="entry name" value="MALATE AND LACTATE DEHYDROGENASE"/>
    <property type="match status" value="1"/>
</dbReference>
<dbReference type="PANTHER" id="PTHR11540:SF73">
    <property type="entry name" value="MALATE DEHYDROGENASE, MITOCHONDRIAL"/>
    <property type="match status" value="1"/>
</dbReference>
<dbReference type="Pfam" id="PF02866">
    <property type="entry name" value="Ldh_1_C"/>
    <property type="match status" value="1"/>
</dbReference>
<dbReference type="Pfam" id="PF00056">
    <property type="entry name" value="Ldh_1_N"/>
    <property type="match status" value="1"/>
</dbReference>
<dbReference type="PIRSF" id="PIRSF000102">
    <property type="entry name" value="Lac_mal_DH"/>
    <property type="match status" value="1"/>
</dbReference>
<dbReference type="SUPFAM" id="SSF56327">
    <property type="entry name" value="LDH C-terminal domain-like"/>
    <property type="match status" value="1"/>
</dbReference>
<dbReference type="SUPFAM" id="SSF51735">
    <property type="entry name" value="NAD(P)-binding Rossmann-fold domains"/>
    <property type="match status" value="1"/>
</dbReference>
<dbReference type="PROSITE" id="PS00068">
    <property type="entry name" value="MDH"/>
    <property type="match status" value="1"/>
</dbReference>
<proteinExistence type="evidence at protein level"/>